<gene>
    <name evidence="1" type="primary">rpmG</name>
    <name type="ordered locus">YPA_3491</name>
</gene>
<accession>Q1C269</accession>
<protein>
    <recommendedName>
        <fullName evidence="1">Large ribosomal subunit protein bL33</fullName>
    </recommendedName>
    <alternativeName>
        <fullName evidence="2">50S ribosomal protein L33</fullName>
    </alternativeName>
</protein>
<organism>
    <name type="scientific">Yersinia pestis bv. Antiqua (strain Antiqua)</name>
    <dbReference type="NCBI Taxonomy" id="360102"/>
    <lineage>
        <taxon>Bacteria</taxon>
        <taxon>Pseudomonadati</taxon>
        <taxon>Pseudomonadota</taxon>
        <taxon>Gammaproteobacteria</taxon>
        <taxon>Enterobacterales</taxon>
        <taxon>Yersiniaceae</taxon>
        <taxon>Yersinia</taxon>
    </lineage>
</organism>
<name>RL33_YERPA</name>
<keyword id="KW-0687">Ribonucleoprotein</keyword>
<keyword id="KW-0689">Ribosomal protein</keyword>
<feature type="chain" id="PRO_1000004219" description="Large ribosomal subunit protein bL33">
    <location>
        <begin position="1"/>
        <end position="55"/>
    </location>
</feature>
<proteinExistence type="inferred from homology"/>
<comment type="similarity">
    <text evidence="1">Belongs to the bacterial ribosomal protein bL33 family.</text>
</comment>
<reference key="1">
    <citation type="journal article" date="2006" name="J. Bacteriol.">
        <title>Complete genome sequence of Yersinia pestis strains Antiqua and Nepal516: evidence of gene reduction in an emerging pathogen.</title>
        <authorList>
            <person name="Chain P.S.G."/>
            <person name="Hu P."/>
            <person name="Malfatti S.A."/>
            <person name="Radnedge L."/>
            <person name="Larimer F."/>
            <person name="Vergez L.M."/>
            <person name="Worsham P."/>
            <person name="Chu M.C."/>
            <person name="Andersen G.L."/>
        </authorList>
    </citation>
    <scope>NUCLEOTIDE SEQUENCE [LARGE SCALE GENOMIC DNA]</scope>
    <source>
        <strain>Antiqua</strain>
    </source>
</reference>
<dbReference type="EMBL" id="CP000308">
    <property type="protein sequence ID" value="ABG15453.1"/>
    <property type="molecule type" value="Genomic_DNA"/>
</dbReference>
<dbReference type="RefSeq" id="WP_002208990.1">
    <property type="nucleotide sequence ID" value="NZ_CP009906.1"/>
</dbReference>
<dbReference type="SMR" id="Q1C269"/>
<dbReference type="GeneID" id="96663532"/>
<dbReference type="KEGG" id="ypa:YPA_3491"/>
<dbReference type="Proteomes" id="UP000001971">
    <property type="component" value="Chromosome"/>
</dbReference>
<dbReference type="GO" id="GO:0022625">
    <property type="term" value="C:cytosolic large ribosomal subunit"/>
    <property type="evidence" value="ECO:0007669"/>
    <property type="project" value="TreeGrafter"/>
</dbReference>
<dbReference type="GO" id="GO:0003735">
    <property type="term" value="F:structural constituent of ribosome"/>
    <property type="evidence" value="ECO:0007669"/>
    <property type="project" value="InterPro"/>
</dbReference>
<dbReference type="GO" id="GO:0006412">
    <property type="term" value="P:translation"/>
    <property type="evidence" value="ECO:0007669"/>
    <property type="project" value="UniProtKB-UniRule"/>
</dbReference>
<dbReference type="FunFam" id="2.20.28.120:FF:000001">
    <property type="entry name" value="50S ribosomal protein L33"/>
    <property type="match status" value="1"/>
</dbReference>
<dbReference type="Gene3D" id="2.20.28.120">
    <property type="entry name" value="Ribosomal protein L33"/>
    <property type="match status" value="1"/>
</dbReference>
<dbReference type="HAMAP" id="MF_00294">
    <property type="entry name" value="Ribosomal_bL33"/>
    <property type="match status" value="1"/>
</dbReference>
<dbReference type="InterPro" id="IPR001705">
    <property type="entry name" value="Ribosomal_bL33"/>
</dbReference>
<dbReference type="InterPro" id="IPR018264">
    <property type="entry name" value="Ribosomal_bL33_CS"/>
</dbReference>
<dbReference type="InterPro" id="IPR038584">
    <property type="entry name" value="Ribosomal_bL33_sf"/>
</dbReference>
<dbReference type="InterPro" id="IPR011332">
    <property type="entry name" value="Ribosomal_zn-bd"/>
</dbReference>
<dbReference type="NCBIfam" id="NF001860">
    <property type="entry name" value="PRK00595.1"/>
    <property type="match status" value="1"/>
</dbReference>
<dbReference type="NCBIfam" id="TIGR01023">
    <property type="entry name" value="rpmG_bact"/>
    <property type="match status" value="1"/>
</dbReference>
<dbReference type="PANTHER" id="PTHR15238">
    <property type="entry name" value="54S RIBOSOMAL PROTEIN L39, MITOCHONDRIAL"/>
    <property type="match status" value="1"/>
</dbReference>
<dbReference type="PANTHER" id="PTHR15238:SF1">
    <property type="entry name" value="LARGE RIBOSOMAL SUBUNIT PROTEIN BL33M"/>
    <property type="match status" value="1"/>
</dbReference>
<dbReference type="Pfam" id="PF00471">
    <property type="entry name" value="Ribosomal_L33"/>
    <property type="match status" value="1"/>
</dbReference>
<dbReference type="SUPFAM" id="SSF57829">
    <property type="entry name" value="Zn-binding ribosomal proteins"/>
    <property type="match status" value="1"/>
</dbReference>
<dbReference type="PROSITE" id="PS00582">
    <property type="entry name" value="RIBOSOMAL_L33"/>
    <property type="match status" value="1"/>
</dbReference>
<sequence length="55" mass="6358">MAKGVREKIKLVSSAGTGHFYTTTKNKRTKPEKLELKKFDPVVRQHVLYKEAKIK</sequence>
<evidence type="ECO:0000255" key="1">
    <source>
        <dbReference type="HAMAP-Rule" id="MF_00294"/>
    </source>
</evidence>
<evidence type="ECO:0000305" key="2"/>